<sequence length="510" mass="56497">MIWHIQNENFILDSTRIFMKAFHLLLFDGSFIFPECILIFGLILLLMIDSTSDQKDIPWLYFISSTSLVMSITALLFRWREEPMISFSGNFQTNNFNEIFQFLILLCSTLCIPLSVEYIECTEMAITEFLLFVLTATLGGMFLCGANDLITIFVAPECFSLCSYLLSGYTKKDVRSNEATTKYLLMGGASSSILVHGFSWLYGSSGGEIELQEIVNGLINTQMYNSPGISIALIFITVGIGFKLSPAPSHQWTPDVYEGSPTPVVAFLSVTSKVAASASATRIFDIPFYFSSNEWHLLLEILAILSMILGNLIAITQTSMKRMLAYSSIGQIGYVIIGIIVGDSNGGYASMITYMLFYISMNLGTFACIVSFGLRTGTDNIRDYAGLYTKDPFLALSLALCLLSLGGLPPLAGFFGKLHLFWCGWQAGLYFLVSIGLLTSVVSIYYYLKIIKLLMTGRNQEITPHVRNYIRSPLRSNNSIELSMIVCVIASTIPGISMNPIIAIAQDTLF</sequence>
<name>NU2C2_VITVI</name>
<dbReference type="EC" id="7.1.1.-" evidence="1"/>
<dbReference type="EMBL" id="DQ424856">
    <property type="protein sequence ID" value="ABE47596.1"/>
    <property type="molecule type" value="Genomic_DNA"/>
</dbReference>
<dbReference type="SMR" id="P0CD57"/>
<dbReference type="FunCoup" id="P0CD57">
    <property type="interactions" value="23"/>
</dbReference>
<dbReference type="STRING" id="29760.P0CD57"/>
<dbReference type="KEGG" id="vvi:4025014"/>
<dbReference type="KEGG" id="vvi:4025030"/>
<dbReference type="InParanoid" id="P0CD57"/>
<dbReference type="OrthoDB" id="916715at71240"/>
<dbReference type="Proteomes" id="UP000009183">
    <property type="component" value="Chloroplast"/>
</dbReference>
<dbReference type="ExpressionAtlas" id="P0CD57">
    <property type="expression patterns" value="baseline and differential"/>
</dbReference>
<dbReference type="GO" id="GO:0009535">
    <property type="term" value="C:chloroplast thylakoid membrane"/>
    <property type="evidence" value="ECO:0007669"/>
    <property type="project" value="UniProtKB-SubCell"/>
</dbReference>
<dbReference type="GO" id="GO:0008137">
    <property type="term" value="F:NADH dehydrogenase (ubiquinone) activity"/>
    <property type="evidence" value="ECO:0007669"/>
    <property type="project" value="InterPro"/>
</dbReference>
<dbReference type="GO" id="GO:0048038">
    <property type="term" value="F:quinone binding"/>
    <property type="evidence" value="ECO:0007669"/>
    <property type="project" value="UniProtKB-KW"/>
</dbReference>
<dbReference type="GO" id="GO:0042773">
    <property type="term" value="P:ATP synthesis coupled electron transport"/>
    <property type="evidence" value="ECO:0007669"/>
    <property type="project" value="InterPro"/>
</dbReference>
<dbReference type="GO" id="GO:0019684">
    <property type="term" value="P:photosynthesis, light reaction"/>
    <property type="evidence" value="ECO:0007669"/>
    <property type="project" value="UniProtKB-UniRule"/>
</dbReference>
<dbReference type="HAMAP" id="MF_00445">
    <property type="entry name" value="NDH1_NuoN_1"/>
    <property type="match status" value="1"/>
</dbReference>
<dbReference type="InterPro" id="IPR010096">
    <property type="entry name" value="NADH-Q_OxRdtase_suN/2"/>
</dbReference>
<dbReference type="InterPro" id="IPR001750">
    <property type="entry name" value="ND/Mrp_TM"/>
</dbReference>
<dbReference type="InterPro" id="IPR045693">
    <property type="entry name" value="Ndh2_N"/>
</dbReference>
<dbReference type="NCBIfam" id="TIGR01770">
    <property type="entry name" value="NDH_I_N"/>
    <property type="match status" value="1"/>
</dbReference>
<dbReference type="NCBIfam" id="NF002701">
    <property type="entry name" value="PRK02504.1"/>
    <property type="match status" value="1"/>
</dbReference>
<dbReference type="PANTHER" id="PTHR22773">
    <property type="entry name" value="NADH DEHYDROGENASE"/>
    <property type="match status" value="1"/>
</dbReference>
<dbReference type="Pfam" id="PF19530">
    <property type="entry name" value="Ndh2_N"/>
    <property type="match status" value="1"/>
</dbReference>
<dbReference type="Pfam" id="PF00361">
    <property type="entry name" value="Proton_antipo_M"/>
    <property type="match status" value="1"/>
</dbReference>
<dbReference type="PRINTS" id="PR01434">
    <property type="entry name" value="NADHDHGNASE5"/>
</dbReference>
<protein>
    <recommendedName>
        <fullName evidence="1">NAD(P)H-quinone oxidoreductase subunit 2 B, chloroplastic</fullName>
        <ecNumber evidence="1">7.1.1.-</ecNumber>
    </recommendedName>
    <alternativeName>
        <fullName evidence="1">NAD(P)H dehydrogenase, subunit 2 B</fullName>
    </alternativeName>
    <alternativeName>
        <fullName evidence="1">NADH-plastoquinone oxidoreductase subunit 2 B</fullName>
    </alternativeName>
</protein>
<proteinExistence type="inferred from homology"/>
<feature type="chain" id="PRO_0000391316" description="NAD(P)H-quinone oxidoreductase subunit 2 B, chloroplastic">
    <location>
        <begin position="1"/>
        <end position="510"/>
    </location>
</feature>
<feature type="transmembrane region" description="Helical" evidence="1">
    <location>
        <begin position="24"/>
        <end position="44"/>
    </location>
</feature>
<feature type="transmembrane region" description="Helical" evidence="1">
    <location>
        <begin position="57"/>
        <end position="77"/>
    </location>
</feature>
<feature type="transmembrane region" description="Helical" evidence="1">
    <location>
        <begin position="99"/>
        <end position="119"/>
    </location>
</feature>
<feature type="transmembrane region" description="Helical" evidence="1">
    <location>
        <begin position="124"/>
        <end position="144"/>
    </location>
</feature>
<feature type="transmembrane region" description="Helical" evidence="1">
    <location>
        <begin position="149"/>
        <end position="169"/>
    </location>
</feature>
<feature type="transmembrane region" description="Helical" evidence="1">
    <location>
        <begin position="183"/>
        <end position="203"/>
    </location>
</feature>
<feature type="transmembrane region" description="Helical" evidence="1">
    <location>
        <begin position="227"/>
        <end position="247"/>
    </location>
</feature>
<feature type="transmembrane region" description="Helical" evidence="1">
    <location>
        <begin position="295"/>
        <end position="315"/>
    </location>
</feature>
<feature type="transmembrane region" description="Helical" evidence="1">
    <location>
        <begin position="323"/>
        <end position="343"/>
    </location>
</feature>
<feature type="transmembrane region" description="Helical" evidence="1">
    <location>
        <begin position="354"/>
        <end position="374"/>
    </location>
</feature>
<feature type="transmembrane region" description="Helical" evidence="1">
    <location>
        <begin position="395"/>
        <end position="415"/>
    </location>
</feature>
<feature type="transmembrane region" description="Helical" evidence="1">
    <location>
        <begin position="418"/>
        <end position="438"/>
    </location>
</feature>
<feature type="transmembrane region" description="Helical" evidence="1">
    <location>
        <begin position="484"/>
        <end position="504"/>
    </location>
</feature>
<gene>
    <name evidence="1" type="primary">ndhB2</name>
</gene>
<reference key="1">
    <citation type="journal article" date="2006" name="BMC Evol. Biol.">
        <title>Phylogenetic analyses of Vitis (Vitaceae) based on complete chloroplast genome sequences: effects of taxon sampling and phylogenetic methods on resolving relationships among rosids.</title>
        <authorList>
            <person name="Jansen R.K."/>
            <person name="Kaittanis C."/>
            <person name="Lee S.-B."/>
            <person name="Saski C."/>
            <person name="Tomkins J."/>
            <person name="Alverson A.J."/>
            <person name="Daniell H."/>
        </authorList>
    </citation>
    <scope>NUCLEOTIDE SEQUENCE [LARGE SCALE GENOMIC DNA]</scope>
    <source>
        <strain>cv. Maxxa</strain>
    </source>
</reference>
<evidence type="ECO:0000255" key="1">
    <source>
        <dbReference type="HAMAP-Rule" id="MF_00445"/>
    </source>
</evidence>
<organism>
    <name type="scientific">Vitis vinifera</name>
    <name type="common">Grape</name>
    <dbReference type="NCBI Taxonomy" id="29760"/>
    <lineage>
        <taxon>Eukaryota</taxon>
        <taxon>Viridiplantae</taxon>
        <taxon>Streptophyta</taxon>
        <taxon>Embryophyta</taxon>
        <taxon>Tracheophyta</taxon>
        <taxon>Spermatophyta</taxon>
        <taxon>Magnoliopsida</taxon>
        <taxon>eudicotyledons</taxon>
        <taxon>Gunneridae</taxon>
        <taxon>Pentapetalae</taxon>
        <taxon>rosids</taxon>
        <taxon>Vitales</taxon>
        <taxon>Vitaceae</taxon>
        <taxon>Viteae</taxon>
        <taxon>Vitis</taxon>
    </lineage>
</organism>
<keyword id="KW-0150">Chloroplast</keyword>
<keyword id="KW-0472">Membrane</keyword>
<keyword id="KW-0520">NAD</keyword>
<keyword id="KW-0521">NADP</keyword>
<keyword id="KW-0934">Plastid</keyword>
<keyword id="KW-0618">Plastoquinone</keyword>
<keyword id="KW-0874">Quinone</keyword>
<keyword id="KW-1185">Reference proteome</keyword>
<keyword id="KW-0793">Thylakoid</keyword>
<keyword id="KW-1278">Translocase</keyword>
<keyword id="KW-0812">Transmembrane</keyword>
<keyword id="KW-1133">Transmembrane helix</keyword>
<keyword id="KW-0813">Transport</keyword>
<geneLocation type="chloroplast"/>
<comment type="function">
    <text evidence="1">NDH shuttles electrons from NAD(P)H:plastoquinone, via FMN and iron-sulfur (Fe-S) centers, to quinones in the photosynthetic chain and possibly in a chloroplast respiratory chain. The immediate electron acceptor for the enzyme in this species is believed to be plastoquinone. Couples the redox reaction to proton translocation, and thus conserves the redox energy in a proton gradient.</text>
</comment>
<comment type="catalytic activity">
    <reaction evidence="1">
        <text>a plastoquinone + NADH + (n+1) H(+)(in) = a plastoquinol + NAD(+) + n H(+)(out)</text>
        <dbReference type="Rhea" id="RHEA:42608"/>
        <dbReference type="Rhea" id="RHEA-COMP:9561"/>
        <dbReference type="Rhea" id="RHEA-COMP:9562"/>
        <dbReference type="ChEBI" id="CHEBI:15378"/>
        <dbReference type="ChEBI" id="CHEBI:17757"/>
        <dbReference type="ChEBI" id="CHEBI:57540"/>
        <dbReference type="ChEBI" id="CHEBI:57945"/>
        <dbReference type="ChEBI" id="CHEBI:62192"/>
    </reaction>
</comment>
<comment type="catalytic activity">
    <reaction evidence="1">
        <text>a plastoquinone + NADPH + (n+1) H(+)(in) = a plastoquinol + NADP(+) + n H(+)(out)</text>
        <dbReference type="Rhea" id="RHEA:42612"/>
        <dbReference type="Rhea" id="RHEA-COMP:9561"/>
        <dbReference type="Rhea" id="RHEA-COMP:9562"/>
        <dbReference type="ChEBI" id="CHEBI:15378"/>
        <dbReference type="ChEBI" id="CHEBI:17757"/>
        <dbReference type="ChEBI" id="CHEBI:57783"/>
        <dbReference type="ChEBI" id="CHEBI:58349"/>
        <dbReference type="ChEBI" id="CHEBI:62192"/>
    </reaction>
</comment>
<comment type="subunit">
    <text evidence="1">NDH is composed of at least 16 different subunits, 5 of which are encoded in the nucleus.</text>
</comment>
<comment type="subcellular location">
    <subcellularLocation>
        <location evidence="1">Plastid</location>
        <location evidence="1">Chloroplast thylakoid membrane</location>
        <topology evidence="1">Multi-pass membrane protein</topology>
    </subcellularLocation>
</comment>
<comment type="similarity">
    <text evidence="1">Belongs to the complex I subunit 2 family.</text>
</comment>
<accession>P0CD57</accession>
<accession>Q0ZIV8</accession>